<organism>
    <name type="scientific">Neisseria meningitidis serogroup A / serotype 4A (strain DSM 15465 / Z2491)</name>
    <dbReference type="NCBI Taxonomy" id="122587"/>
    <lineage>
        <taxon>Bacteria</taxon>
        <taxon>Pseudomonadati</taxon>
        <taxon>Pseudomonadota</taxon>
        <taxon>Betaproteobacteria</taxon>
        <taxon>Neisseriales</taxon>
        <taxon>Neisseriaceae</taxon>
        <taxon>Neisseria</taxon>
    </lineage>
</organism>
<keyword id="KW-0143">Chaperone</keyword>
<keyword id="KW-0963">Cytoplasm</keyword>
<keyword id="KW-1015">Disulfide bond</keyword>
<keyword id="KW-0676">Redox-active center</keyword>
<keyword id="KW-0862">Zinc</keyword>
<sequence>MNQTAINRADVRTRFIFDDMPVRGLHVRLENVWQHIVKQKNYPAAIRRALGELLAAGVLLSGNLKNEGTLIVQVQGQGRLKMLVAEATSDRTVRATARWDETAEIADDESLGDLLGEGGVFVLTLQPKDGEPWQGVVPLEGDGIAQMLVNYMKRSEQLDTHIVLSASDEAAGGLLVQRLPEEVLDEEAWEHVSTLARTLTAEELAGLDAQHVLYRLFHETPPRVFEPETFEFSCTCSRGKVSDMLLMLGGEEVGGVVVEQGSIEVDCDFCHSKYVFDETDVNALFGEDVVGVAKGLPRHTVQ</sequence>
<protein>
    <recommendedName>
        <fullName evidence="1">33 kDa chaperonin</fullName>
    </recommendedName>
    <alternativeName>
        <fullName evidence="1">Heat shock protein 33 homolog</fullName>
        <shortName evidence="1">HSP33</shortName>
    </alternativeName>
</protein>
<evidence type="ECO:0000255" key="1">
    <source>
        <dbReference type="HAMAP-Rule" id="MF_00117"/>
    </source>
</evidence>
<evidence type="ECO:0000305" key="2"/>
<reference key="1">
    <citation type="journal article" date="2000" name="Nature">
        <title>Complete DNA sequence of a serogroup A strain of Neisseria meningitidis Z2491.</title>
        <authorList>
            <person name="Parkhill J."/>
            <person name="Achtman M."/>
            <person name="James K.D."/>
            <person name="Bentley S.D."/>
            <person name="Churcher C.M."/>
            <person name="Klee S.R."/>
            <person name="Morelli G."/>
            <person name="Basham D."/>
            <person name="Brown D."/>
            <person name="Chillingworth T."/>
            <person name="Davies R.M."/>
            <person name="Davis P."/>
            <person name="Devlin K."/>
            <person name="Feltwell T."/>
            <person name="Hamlin N."/>
            <person name="Holroyd S."/>
            <person name="Jagels K."/>
            <person name="Leather S."/>
            <person name="Moule S."/>
            <person name="Mungall K.L."/>
            <person name="Quail M.A."/>
            <person name="Rajandream M.A."/>
            <person name="Rutherford K.M."/>
            <person name="Simmonds M."/>
            <person name="Skelton J."/>
            <person name="Whitehead S."/>
            <person name="Spratt B.G."/>
            <person name="Barrell B.G."/>
        </authorList>
    </citation>
    <scope>NUCLEOTIDE SEQUENCE [LARGE SCALE GENOMIC DNA]</scope>
    <source>
        <strain>DSM 15465 / Z2491</strain>
    </source>
</reference>
<comment type="function">
    <text evidence="1">Redox regulated molecular chaperone. Protects both thermally unfolding and oxidatively damaged proteins from irreversible aggregation. Plays an important role in the bacterial defense system toward oxidative stress.</text>
</comment>
<comment type="subcellular location">
    <subcellularLocation>
        <location evidence="1">Cytoplasm</location>
    </subcellularLocation>
</comment>
<comment type="PTM">
    <text evidence="1">Under oxidizing conditions two disulfide bonds are formed involving the reactive cysteines. Under reducing conditions zinc is bound to the reactive cysteines and the protein is inactive.</text>
</comment>
<comment type="similarity">
    <text evidence="1">Belongs to the HSP33 family.</text>
</comment>
<comment type="sequence caution" evidence="2">
    <conflict type="erroneous initiation">
        <sequence resource="EMBL-CDS" id="CAM07727"/>
    </conflict>
</comment>
<proteinExistence type="inferred from homology"/>
<feature type="chain" id="PRO_0000192186" description="33 kDa chaperonin">
    <location>
        <begin position="1"/>
        <end position="302"/>
    </location>
</feature>
<feature type="disulfide bond" description="Redox-active" evidence="1">
    <location>
        <begin position="234"/>
        <end position="236"/>
    </location>
</feature>
<feature type="disulfide bond" description="Redox-active" evidence="1">
    <location>
        <begin position="267"/>
        <end position="270"/>
    </location>
</feature>
<accession>Q9JWC8</accession>
<accession>A1IPQ6</accession>
<dbReference type="EMBL" id="AL157959">
    <property type="protein sequence ID" value="CAM07727.1"/>
    <property type="status" value="ALT_INIT"/>
    <property type="molecule type" value="Genomic_DNA"/>
</dbReference>
<dbReference type="RefSeq" id="WP_002218125.1">
    <property type="nucleotide sequence ID" value="NC_003116.1"/>
</dbReference>
<dbReference type="SMR" id="Q9JWC8"/>
<dbReference type="EnsemblBacteria" id="CAM07727">
    <property type="protein sequence ID" value="CAM07727"/>
    <property type="gene ID" value="NMA0441"/>
</dbReference>
<dbReference type="GeneID" id="93386916"/>
<dbReference type="KEGG" id="nma:NMA0441"/>
<dbReference type="HOGENOM" id="CLU_054493_0_0_4"/>
<dbReference type="Proteomes" id="UP000000626">
    <property type="component" value="Chromosome"/>
</dbReference>
<dbReference type="GO" id="GO:0005737">
    <property type="term" value="C:cytoplasm"/>
    <property type="evidence" value="ECO:0007669"/>
    <property type="project" value="UniProtKB-SubCell"/>
</dbReference>
<dbReference type="GO" id="GO:0044183">
    <property type="term" value="F:protein folding chaperone"/>
    <property type="evidence" value="ECO:0007669"/>
    <property type="project" value="TreeGrafter"/>
</dbReference>
<dbReference type="GO" id="GO:0051082">
    <property type="term" value="F:unfolded protein binding"/>
    <property type="evidence" value="ECO:0007669"/>
    <property type="project" value="UniProtKB-UniRule"/>
</dbReference>
<dbReference type="GO" id="GO:0042026">
    <property type="term" value="P:protein refolding"/>
    <property type="evidence" value="ECO:0007669"/>
    <property type="project" value="TreeGrafter"/>
</dbReference>
<dbReference type="CDD" id="cd00498">
    <property type="entry name" value="Hsp33"/>
    <property type="match status" value="1"/>
</dbReference>
<dbReference type="Gene3D" id="1.10.287.480">
    <property type="entry name" value="helix hairpin bin"/>
    <property type="match status" value="1"/>
</dbReference>
<dbReference type="Gene3D" id="3.55.30.10">
    <property type="entry name" value="Hsp33 domain"/>
    <property type="match status" value="1"/>
</dbReference>
<dbReference type="Gene3D" id="3.90.1280.10">
    <property type="entry name" value="HSP33 redox switch-like"/>
    <property type="match status" value="1"/>
</dbReference>
<dbReference type="HAMAP" id="MF_00117">
    <property type="entry name" value="HslO"/>
    <property type="match status" value="1"/>
</dbReference>
<dbReference type="InterPro" id="IPR000397">
    <property type="entry name" value="Heat_shock_Hsp33"/>
</dbReference>
<dbReference type="InterPro" id="IPR016154">
    <property type="entry name" value="Heat_shock_Hsp33_C"/>
</dbReference>
<dbReference type="InterPro" id="IPR016153">
    <property type="entry name" value="Heat_shock_Hsp33_N"/>
</dbReference>
<dbReference type="InterPro" id="IPR023212">
    <property type="entry name" value="Hsp33_helix_hairpin_bin_dom_sf"/>
</dbReference>
<dbReference type="NCBIfam" id="NF001033">
    <property type="entry name" value="PRK00114.1"/>
    <property type="match status" value="1"/>
</dbReference>
<dbReference type="PANTHER" id="PTHR30111">
    <property type="entry name" value="33 KDA CHAPERONIN"/>
    <property type="match status" value="1"/>
</dbReference>
<dbReference type="PANTHER" id="PTHR30111:SF1">
    <property type="entry name" value="33 KDA CHAPERONIN"/>
    <property type="match status" value="1"/>
</dbReference>
<dbReference type="Pfam" id="PF01430">
    <property type="entry name" value="HSP33"/>
    <property type="match status" value="1"/>
</dbReference>
<dbReference type="PIRSF" id="PIRSF005261">
    <property type="entry name" value="Heat_shock_Hsp33"/>
    <property type="match status" value="1"/>
</dbReference>
<dbReference type="SUPFAM" id="SSF64397">
    <property type="entry name" value="Hsp33 domain"/>
    <property type="match status" value="1"/>
</dbReference>
<dbReference type="SUPFAM" id="SSF118352">
    <property type="entry name" value="HSP33 redox switch-like"/>
    <property type="match status" value="1"/>
</dbReference>
<gene>
    <name evidence="1" type="primary">hslO</name>
    <name type="ordered locus">NMA0441</name>
</gene>
<name>HSLO_NEIMA</name>